<proteinExistence type="inferred from homology"/>
<gene>
    <name type="ordered locus">DR_1435</name>
</gene>
<comment type="function">
    <text evidence="1">Required for morphogenesis under gluconeogenic growth conditions.</text>
</comment>
<comment type="subcellular location">
    <subcellularLocation>
        <location evidence="1">Cytoplasm</location>
    </subcellularLocation>
</comment>
<comment type="similarity">
    <text evidence="1">Belongs to the gluconeogenesis factor family.</text>
</comment>
<reference key="1">
    <citation type="journal article" date="1999" name="Science">
        <title>Genome sequence of the radioresistant bacterium Deinococcus radiodurans R1.</title>
        <authorList>
            <person name="White O."/>
            <person name="Eisen J.A."/>
            <person name="Heidelberg J.F."/>
            <person name="Hickey E.K."/>
            <person name="Peterson J.D."/>
            <person name="Dodson R.J."/>
            <person name="Haft D.H."/>
            <person name="Gwinn M.L."/>
            <person name="Nelson W.C."/>
            <person name="Richardson D.L."/>
            <person name="Moffat K.S."/>
            <person name="Qin H."/>
            <person name="Jiang L."/>
            <person name="Pamphile W."/>
            <person name="Crosby M."/>
            <person name="Shen M."/>
            <person name="Vamathevan J.J."/>
            <person name="Lam P."/>
            <person name="McDonald L.A."/>
            <person name="Utterback T.R."/>
            <person name="Zalewski C."/>
            <person name="Makarova K.S."/>
            <person name="Aravind L."/>
            <person name="Daly M.J."/>
            <person name="Minton K.W."/>
            <person name="Fleischmann R.D."/>
            <person name="Ketchum K.A."/>
            <person name="Nelson K.E."/>
            <person name="Salzberg S.L."/>
            <person name="Smith H.O."/>
            <person name="Venter J.C."/>
            <person name="Fraser C.M."/>
        </authorList>
    </citation>
    <scope>NUCLEOTIDE SEQUENCE [LARGE SCALE GENOMIC DNA]</scope>
    <source>
        <strain>ATCC 13939 / DSM 20539 / JCM 16871 / CCUG 27074 / LMG 4051 / NBRC 15346 / NCIMB 9279 / VKM B-1422 / R1</strain>
    </source>
</reference>
<evidence type="ECO:0000255" key="1">
    <source>
        <dbReference type="HAMAP-Rule" id="MF_00973"/>
    </source>
</evidence>
<evidence type="ECO:0000256" key="2">
    <source>
        <dbReference type="SAM" id="MobiDB-lite"/>
    </source>
</evidence>
<sequence>MSAPPAPPPDRSAPPDRTDSAQTEPTRPLVRRARRARMWLEPGLGVKRWIFLFVVCTFVGAVAFLHFTWTGPLHPLATKWILWLNQFAEPGVFPLYAVGMVVMALALAGALYSITMISRAMLRGTGTAPETAVNVLYERKTLSRGMRVVTVGGGTGLSNLLTGLKTHSSNITAVVTVADDGGSSGRLREALDMVAPGDLTDCYAALSESPALARLLLHRFGRGEGLEGHTFGNLLLATLSEERGGLGTAMQDIHEILKVRGRVYPATTRPVTLVAELADGRTIRGESRFAEQIRPSRIERVRLEPENPSALTQVLEAVRDAEMIVLGPGSLFTSIIPALLIPDIARAVRESPAPVVYVASLMTEPGETDGLSLSDHVNAITRHLGRTPDWVLLSNSKIEPAVQRRYQQEGATVLTLDGAGRDLRGRVRFAPLIQAGTARHDPQKLAAALMQLWDGPPRRFSLPGQRD</sequence>
<dbReference type="EMBL" id="AE000513">
    <property type="protein sequence ID" value="AAF11007.1"/>
    <property type="molecule type" value="Genomic_DNA"/>
</dbReference>
<dbReference type="PIR" id="E75395">
    <property type="entry name" value="E75395"/>
</dbReference>
<dbReference type="RefSeq" id="NP_295158.1">
    <property type="nucleotide sequence ID" value="NC_001263.1"/>
</dbReference>
<dbReference type="RefSeq" id="WP_010888074.1">
    <property type="nucleotide sequence ID" value="NC_001263.1"/>
</dbReference>
<dbReference type="SMR" id="Q9RUF1"/>
<dbReference type="FunCoup" id="Q9RUF1">
    <property type="interactions" value="71"/>
</dbReference>
<dbReference type="STRING" id="243230.DR_1435"/>
<dbReference type="PaxDb" id="243230-DR_1435"/>
<dbReference type="EnsemblBacteria" id="AAF11007">
    <property type="protein sequence ID" value="AAF11007"/>
    <property type="gene ID" value="DR_1435"/>
</dbReference>
<dbReference type="GeneID" id="69517676"/>
<dbReference type="KEGG" id="dra:DR_1435"/>
<dbReference type="PATRIC" id="fig|243230.17.peg.1631"/>
<dbReference type="eggNOG" id="COG0391">
    <property type="taxonomic scope" value="Bacteria"/>
</dbReference>
<dbReference type="HOGENOM" id="CLU_044041_0_0_0"/>
<dbReference type="InParanoid" id="Q9RUF1"/>
<dbReference type="OrthoDB" id="9783842at2"/>
<dbReference type="Proteomes" id="UP000002524">
    <property type="component" value="Chromosome 1"/>
</dbReference>
<dbReference type="GO" id="GO:0005737">
    <property type="term" value="C:cytoplasm"/>
    <property type="evidence" value="ECO:0007669"/>
    <property type="project" value="UniProtKB-SubCell"/>
</dbReference>
<dbReference type="GO" id="GO:0043743">
    <property type="term" value="F:LPPG:FO 2-phospho-L-lactate transferase activity"/>
    <property type="evidence" value="ECO:0007669"/>
    <property type="project" value="InterPro"/>
</dbReference>
<dbReference type="GO" id="GO:0008360">
    <property type="term" value="P:regulation of cell shape"/>
    <property type="evidence" value="ECO:0007669"/>
    <property type="project" value="UniProtKB-UniRule"/>
</dbReference>
<dbReference type="CDD" id="cd07187">
    <property type="entry name" value="YvcK_like"/>
    <property type="match status" value="1"/>
</dbReference>
<dbReference type="Gene3D" id="3.40.50.10680">
    <property type="entry name" value="CofD-like domains"/>
    <property type="match status" value="1"/>
</dbReference>
<dbReference type="HAMAP" id="MF_00973">
    <property type="entry name" value="Gluconeogen_factor"/>
    <property type="match status" value="1"/>
</dbReference>
<dbReference type="InterPro" id="IPR002882">
    <property type="entry name" value="CofD"/>
</dbReference>
<dbReference type="InterPro" id="IPR038136">
    <property type="entry name" value="CofD-like_dom_sf"/>
</dbReference>
<dbReference type="InterPro" id="IPR010119">
    <property type="entry name" value="Gluconeogen_factor"/>
</dbReference>
<dbReference type="NCBIfam" id="TIGR01826">
    <property type="entry name" value="CofD_related"/>
    <property type="match status" value="1"/>
</dbReference>
<dbReference type="PANTHER" id="PTHR30135:SF3">
    <property type="entry name" value="GLUCONEOGENESIS FACTOR-RELATED"/>
    <property type="match status" value="1"/>
</dbReference>
<dbReference type="PANTHER" id="PTHR30135">
    <property type="entry name" value="UNCHARACTERIZED PROTEIN YVCK-RELATED"/>
    <property type="match status" value="1"/>
</dbReference>
<dbReference type="Pfam" id="PF01933">
    <property type="entry name" value="CofD"/>
    <property type="match status" value="1"/>
</dbReference>
<dbReference type="SUPFAM" id="SSF142338">
    <property type="entry name" value="CofD-like"/>
    <property type="match status" value="1"/>
</dbReference>
<keyword id="KW-0963">Cytoplasm</keyword>
<keyword id="KW-1185">Reference proteome</keyword>
<protein>
    <recommendedName>
        <fullName evidence="1">Putative gluconeogenesis factor</fullName>
    </recommendedName>
</protein>
<organism>
    <name type="scientific">Deinococcus radiodurans (strain ATCC 13939 / DSM 20539 / JCM 16871 / CCUG 27074 / LMG 4051 / NBRC 15346 / NCIMB 9279 / VKM B-1422 / R1)</name>
    <dbReference type="NCBI Taxonomy" id="243230"/>
    <lineage>
        <taxon>Bacteria</taxon>
        <taxon>Thermotogati</taxon>
        <taxon>Deinococcota</taxon>
        <taxon>Deinococci</taxon>
        <taxon>Deinococcales</taxon>
        <taxon>Deinococcaceae</taxon>
        <taxon>Deinococcus</taxon>
    </lineage>
</organism>
<feature type="chain" id="PRO_0000107806" description="Putative gluconeogenesis factor">
    <location>
        <begin position="1"/>
        <end position="467"/>
    </location>
</feature>
<feature type="region of interest" description="Disordered" evidence="2">
    <location>
        <begin position="1"/>
        <end position="27"/>
    </location>
</feature>
<feature type="compositionally biased region" description="Pro residues" evidence="2">
    <location>
        <begin position="1"/>
        <end position="12"/>
    </location>
</feature>
<accession>Q9RUF1</accession>
<name>GNGF_DEIRA</name>